<name>TRUB_STAAS</name>
<protein>
    <recommendedName>
        <fullName evidence="1">tRNA pseudouridine synthase B</fullName>
        <ecNumber evidence="1">5.4.99.25</ecNumber>
    </recommendedName>
    <alternativeName>
        <fullName evidence="1">tRNA pseudouridine(55) synthase</fullName>
        <shortName evidence="1">Psi55 synthase</shortName>
    </alternativeName>
    <alternativeName>
        <fullName evidence="1">tRNA pseudouridylate synthase</fullName>
    </alternativeName>
    <alternativeName>
        <fullName evidence="1">tRNA-uridine isomerase</fullName>
    </alternativeName>
</protein>
<accession>Q6G9U2</accession>
<organism>
    <name type="scientific">Staphylococcus aureus (strain MSSA476)</name>
    <dbReference type="NCBI Taxonomy" id="282459"/>
    <lineage>
        <taxon>Bacteria</taxon>
        <taxon>Bacillati</taxon>
        <taxon>Bacillota</taxon>
        <taxon>Bacilli</taxon>
        <taxon>Bacillales</taxon>
        <taxon>Staphylococcaceae</taxon>
        <taxon>Staphylococcus</taxon>
    </lineage>
</organism>
<gene>
    <name evidence="1" type="primary">truB</name>
    <name type="ordered locus">SAS1205</name>
</gene>
<evidence type="ECO:0000255" key="1">
    <source>
        <dbReference type="HAMAP-Rule" id="MF_01080"/>
    </source>
</evidence>
<dbReference type="EC" id="5.4.99.25" evidence="1"/>
<dbReference type="EMBL" id="BX571857">
    <property type="protein sequence ID" value="CAG42982.1"/>
    <property type="molecule type" value="Genomic_DNA"/>
</dbReference>
<dbReference type="RefSeq" id="WP_000282293.1">
    <property type="nucleotide sequence ID" value="NC_002953.3"/>
</dbReference>
<dbReference type="SMR" id="Q6G9U2"/>
<dbReference type="KEGG" id="sas:SAS1205"/>
<dbReference type="HOGENOM" id="CLU_032087_0_1_9"/>
<dbReference type="GO" id="GO:0003723">
    <property type="term" value="F:RNA binding"/>
    <property type="evidence" value="ECO:0007669"/>
    <property type="project" value="InterPro"/>
</dbReference>
<dbReference type="GO" id="GO:0160148">
    <property type="term" value="F:tRNA pseudouridine(55) synthase activity"/>
    <property type="evidence" value="ECO:0007669"/>
    <property type="project" value="UniProtKB-EC"/>
</dbReference>
<dbReference type="GO" id="GO:1990481">
    <property type="term" value="P:mRNA pseudouridine synthesis"/>
    <property type="evidence" value="ECO:0007669"/>
    <property type="project" value="TreeGrafter"/>
</dbReference>
<dbReference type="GO" id="GO:0031119">
    <property type="term" value="P:tRNA pseudouridine synthesis"/>
    <property type="evidence" value="ECO:0007669"/>
    <property type="project" value="UniProtKB-UniRule"/>
</dbReference>
<dbReference type="CDD" id="cd02573">
    <property type="entry name" value="PseudoU_synth_EcTruB"/>
    <property type="match status" value="1"/>
</dbReference>
<dbReference type="FunFam" id="3.30.2350.10:FF:000011">
    <property type="entry name" value="tRNA pseudouridine synthase B"/>
    <property type="match status" value="1"/>
</dbReference>
<dbReference type="Gene3D" id="3.30.2350.10">
    <property type="entry name" value="Pseudouridine synthase"/>
    <property type="match status" value="1"/>
</dbReference>
<dbReference type="HAMAP" id="MF_01080">
    <property type="entry name" value="TruB_bact"/>
    <property type="match status" value="1"/>
</dbReference>
<dbReference type="InterPro" id="IPR020103">
    <property type="entry name" value="PsdUridine_synth_cat_dom_sf"/>
</dbReference>
<dbReference type="InterPro" id="IPR002501">
    <property type="entry name" value="PsdUridine_synth_N"/>
</dbReference>
<dbReference type="InterPro" id="IPR014780">
    <property type="entry name" value="tRNA_psdUridine_synth_TruB"/>
</dbReference>
<dbReference type="InterPro" id="IPR032819">
    <property type="entry name" value="TruB_C"/>
</dbReference>
<dbReference type="NCBIfam" id="TIGR00431">
    <property type="entry name" value="TruB"/>
    <property type="match status" value="1"/>
</dbReference>
<dbReference type="PANTHER" id="PTHR13767:SF2">
    <property type="entry name" value="PSEUDOURIDYLATE SYNTHASE TRUB1"/>
    <property type="match status" value="1"/>
</dbReference>
<dbReference type="PANTHER" id="PTHR13767">
    <property type="entry name" value="TRNA-PSEUDOURIDINE SYNTHASE"/>
    <property type="match status" value="1"/>
</dbReference>
<dbReference type="Pfam" id="PF16198">
    <property type="entry name" value="TruB_C_2"/>
    <property type="match status" value="1"/>
</dbReference>
<dbReference type="Pfam" id="PF01509">
    <property type="entry name" value="TruB_N"/>
    <property type="match status" value="1"/>
</dbReference>
<dbReference type="SUPFAM" id="SSF55120">
    <property type="entry name" value="Pseudouridine synthase"/>
    <property type="match status" value="1"/>
</dbReference>
<proteinExistence type="inferred from homology"/>
<reference key="1">
    <citation type="journal article" date="2004" name="Proc. Natl. Acad. Sci. U.S.A.">
        <title>Complete genomes of two clinical Staphylococcus aureus strains: evidence for the rapid evolution of virulence and drug resistance.</title>
        <authorList>
            <person name="Holden M.T.G."/>
            <person name="Feil E.J."/>
            <person name="Lindsay J.A."/>
            <person name="Peacock S.J."/>
            <person name="Day N.P.J."/>
            <person name="Enright M.C."/>
            <person name="Foster T.J."/>
            <person name="Moore C.E."/>
            <person name="Hurst L."/>
            <person name="Atkin R."/>
            <person name="Barron A."/>
            <person name="Bason N."/>
            <person name="Bentley S.D."/>
            <person name="Chillingworth C."/>
            <person name="Chillingworth T."/>
            <person name="Churcher C."/>
            <person name="Clark L."/>
            <person name="Corton C."/>
            <person name="Cronin A."/>
            <person name="Doggett J."/>
            <person name="Dowd L."/>
            <person name="Feltwell T."/>
            <person name="Hance Z."/>
            <person name="Harris B."/>
            <person name="Hauser H."/>
            <person name="Holroyd S."/>
            <person name="Jagels K."/>
            <person name="James K.D."/>
            <person name="Lennard N."/>
            <person name="Line A."/>
            <person name="Mayes R."/>
            <person name="Moule S."/>
            <person name="Mungall K."/>
            <person name="Ormond D."/>
            <person name="Quail M.A."/>
            <person name="Rabbinowitsch E."/>
            <person name="Rutherford K.M."/>
            <person name="Sanders M."/>
            <person name="Sharp S."/>
            <person name="Simmonds M."/>
            <person name="Stevens K."/>
            <person name="Whitehead S."/>
            <person name="Barrell B.G."/>
            <person name="Spratt B.G."/>
            <person name="Parkhill J."/>
        </authorList>
    </citation>
    <scope>NUCLEOTIDE SEQUENCE [LARGE SCALE GENOMIC DNA]</scope>
    <source>
        <strain>MSSA476</strain>
    </source>
</reference>
<feature type="chain" id="PRO_0000121906" description="tRNA pseudouridine synthase B">
    <location>
        <begin position="1"/>
        <end position="305"/>
    </location>
</feature>
<feature type="active site" description="Nucleophile" evidence="1">
    <location>
        <position position="39"/>
    </location>
</feature>
<keyword id="KW-0413">Isomerase</keyword>
<keyword id="KW-0819">tRNA processing</keyword>
<sequence>MYNGILPVYKERGLTSHDVVFKLRKILKTKKIGHTGTLDPEVAGVLPVCIGNATRVSDYVMDMGKAYEATVSIGRSTTTEDQTGDTLEKKGVHSADFNKDDIDRLLESFKGIIEQIPPMYSSVKVNGKKLYEYARNNETVERPKRKVNIKDIGRISELDFKENECHFKIRVICGKGTYIRTLATDIGVKLGFPAHMSKLTRIESGGFVLKDSLTLEQIKELHEQDSLQNKLFPLEYGLKGLPSIKIKDSHIKKRILNGQKFNKNEFDNKIKDQIVFIDDDSEKVLAIYMVHPTKESEIKPKKVFN</sequence>
<comment type="function">
    <text evidence="1">Responsible for synthesis of pseudouridine from uracil-55 in the psi GC loop of transfer RNAs.</text>
</comment>
<comment type="catalytic activity">
    <reaction evidence="1">
        <text>uridine(55) in tRNA = pseudouridine(55) in tRNA</text>
        <dbReference type="Rhea" id="RHEA:42532"/>
        <dbReference type="Rhea" id="RHEA-COMP:10101"/>
        <dbReference type="Rhea" id="RHEA-COMP:10102"/>
        <dbReference type="ChEBI" id="CHEBI:65314"/>
        <dbReference type="ChEBI" id="CHEBI:65315"/>
        <dbReference type="EC" id="5.4.99.25"/>
    </reaction>
</comment>
<comment type="similarity">
    <text evidence="1">Belongs to the pseudouridine synthase TruB family. Type 1 subfamily.</text>
</comment>